<protein>
    <recommendedName>
        <fullName evidence="1">Large ribosomal subunit protein uL6</fullName>
    </recommendedName>
    <alternativeName>
        <fullName evidence="2">50S ribosomal protein L6</fullName>
    </alternativeName>
</protein>
<keyword id="KW-1185">Reference proteome</keyword>
<keyword id="KW-0687">Ribonucleoprotein</keyword>
<keyword id="KW-0689">Ribosomal protein</keyword>
<keyword id="KW-0694">RNA-binding</keyword>
<keyword id="KW-0699">rRNA-binding</keyword>
<name>RL6_RHILW</name>
<feature type="chain" id="PRO_1000144036" description="Large ribosomal subunit protein uL6">
    <location>
        <begin position="1"/>
        <end position="177"/>
    </location>
</feature>
<reference key="1">
    <citation type="journal article" date="2010" name="Stand. Genomic Sci.">
        <title>Complete genome sequence of Rhizobium leguminosarum bv trifolii strain WSM2304, an effective microsymbiont of the South American clover Trifolium polymorphum.</title>
        <authorList>
            <person name="Reeve W."/>
            <person name="O'Hara G."/>
            <person name="Chain P."/>
            <person name="Ardley J."/>
            <person name="Brau L."/>
            <person name="Nandesena K."/>
            <person name="Tiwari R."/>
            <person name="Malfatti S."/>
            <person name="Kiss H."/>
            <person name="Lapidus A."/>
            <person name="Copeland A."/>
            <person name="Nolan M."/>
            <person name="Land M."/>
            <person name="Ivanova N."/>
            <person name="Mavromatis K."/>
            <person name="Markowitz V."/>
            <person name="Kyrpides N."/>
            <person name="Melino V."/>
            <person name="Denton M."/>
            <person name="Yates R."/>
            <person name="Howieson J."/>
        </authorList>
    </citation>
    <scope>NUCLEOTIDE SEQUENCE [LARGE SCALE GENOMIC DNA]</scope>
    <source>
        <strain>WSM2304</strain>
    </source>
</reference>
<comment type="function">
    <text evidence="1">This protein binds to the 23S rRNA, and is important in its secondary structure. It is located near the subunit interface in the base of the L7/L12 stalk, and near the tRNA binding site of the peptidyltransferase center.</text>
</comment>
<comment type="subunit">
    <text evidence="1">Part of the 50S ribosomal subunit.</text>
</comment>
<comment type="similarity">
    <text evidence="1">Belongs to the universal ribosomal protein uL6 family.</text>
</comment>
<sequence length="177" mass="19319">MSRIGKKPVQVPAGITATVDGQKVTAKGPKGELFFVANDEISLKLENNAVVVTPVNQTKDARSKWGMSRTMIEGIFKGVKDGFERKLEINGVGYRASLQGKNLQLALGFSHDVLYEPPVGITIAVPKPTEIVVSGINKQQVGQVAAEIREYRGPEPYKGKGVKYADERIVRKEGKKK</sequence>
<accession>B5ZYV0</accession>
<gene>
    <name evidence="1" type="primary">rplF</name>
    <name type="ordered locus">Rleg2_1347</name>
</gene>
<dbReference type="EMBL" id="CP001191">
    <property type="protein sequence ID" value="ACI54641.1"/>
    <property type="molecule type" value="Genomic_DNA"/>
</dbReference>
<dbReference type="RefSeq" id="WP_012557365.1">
    <property type="nucleotide sequence ID" value="NC_011369.1"/>
</dbReference>
<dbReference type="SMR" id="B5ZYV0"/>
<dbReference type="STRING" id="395492.Rleg2_1347"/>
<dbReference type="KEGG" id="rlt:Rleg2_1347"/>
<dbReference type="eggNOG" id="COG0097">
    <property type="taxonomic scope" value="Bacteria"/>
</dbReference>
<dbReference type="HOGENOM" id="CLU_065464_1_2_5"/>
<dbReference type="Proteomes" id="UP000008330">
    <property type="component" value="Chromosome"/>
</dbReference>
<dbReference type="GO" id="GO:0022625">
    <property type="term" value="C:cytosolic large ribosomal subunit"/>
    <property type="evidence" value="ECO:0007669"/>
    <property type="project" value="TreeGrafter"/>
</dbReference>
<dbReference type="GO" id="GO:0019843">
    <property type="term" value="F:rRNA binding"/>
    <property type="evidence" value="ECO:0007669"/>
    <property type="project" value="UniProtKB-UniRule"/>
</dbReference>
<dbReference type="GO" id="GO:0003735">
    <property type="term" value="F:structural constituent of ribosome"/>
    <property type="evidence" value="ECO:0007669"/>
    <property type="project" value="InterPro"/>
</dbReference>
<dbReference type="GO" id="GO:0002181">
    <property type="term" value="P:cytoplasmic translation"/>
    <property type="evidence" value="ECO:0007669"/>
    <property type="project" value="TreeGrafter"/>
</dbReference>
<dbReference type="FunFam" id="3.90.930.12:FF:000001">
    <property type="entry name" value="50S ribosomal protein L6"/>
    <property type="match status" value="1"/>
</dbReference>
<dbReference type="Gene3D" id="3.90.930.12">
    <property type="entry name" value="Ribosomal protein L6, alpha-beta domain"/>
    <property type="match status" value="2"/>
</dbReference>
<dbReference type="HAMAP" id="MF_01365_B">
    <property type="entry name" value="Ribosomal_uL6_B"/>
    <property type="match status" value="1"/>
</dbReference>
<dbReference type="InterPro" id="IPR000702">
    <property type="entry name" value="Ribosomal_uL6-like"/>
</dbReference>
<dbReference type="InterPro" id="IPR036789">
    <property type="entry name" value="Ribosomal_uL6-like_a/b-dom_sf"/>
</dbReference>
<dbReference type="InterPro" id="IPR020040">
    <property type="entry name" value="Ribosomal_uL6_a/b-dom"/>
</dbReference>
<dbReference type="InterPro" id="IPR019906">
    <property type="entry name" value="Ribosomal_uL6_bac-type"/>
</dbReference>
<dbReference type="InterPro" id="IPR002358">
    <property type="entry name" value="Ribosomal_uL6_CS"/>
</dbReference>
<dbReference type="NCBIfam" id="TIGR03654">
    <property type="entry name" value="L6_bact"/>
    <property type="match status" value="1"/>
</dbReference>
<dbReference type="PANTHER" id="PTHR11655">
    <property type="entry name" value="60S/50S RIBOSOMAL PROTEIN L6/L9"/>
    <property type="match status" value="1"/>
</dbReference>
<dbReference type="PANTHER" id="PTHR11655:SF14">
    <property type="entry name" value="LARGE RIBOSOMAL SUBUNIT PROTEIN UL6M"/>
    <property type="match status" value="1"/>
</dbReference>
<dbReference type="Pfam" id="PF00347">
    <property type="entry name" value="Ribosomal_L6"/>
    <property type="match status" value="2"/>
</dbReference>
<dbReference type="PIRSF" id="PIRSF002162">
    <property type="entry name" value="Ribosomal_L6"/>
    <property type="match status" value="1"/>
</dbReference>
<dbReference type="PRINTS" id="PR00059">
    <property type="entry name" value="RIBOSOMALL6"/>
</dbReference>
<dbReference type="SUPFAM" id="SSF56053">
    <property type="entry name" value="Ribosomal protein L6"/>
    <property type="match status" value="2"/>
</dbReference>
<dbReference type="PROSITE" id="PS00525">
    <property type="entry name" value="RIBOSOMAL_L6_1"/>
    <property type="match status" value="1"/>
</dbReference>
<organism>
    <name type="scientific">Rhizobium leguminosarum bv. trifolii (strain WSM2304)</name>
    <dbReference type="NCBI Taxonomy" id="395492"/>
    <lineage>
        <taxon>Bacteria</taxon>
        <taxon>Pseudomonadati</taxon>
        <taxon>Pseudomonadota</taxon>
        <taxon>Alphaproteobacteria</taxon>
        <taxon>Hyphomicrobiales</taxon>
        <taxon>Rhizobiaceae</taxon>
        <taxon>Rhizobium/Agrobacterium group</taxon>
        <taxon>Rhizobium</taxon>
    </lineage>
</organism>
<evidence type="ECO:0000255" key="1">
    <source>
        <dbReference type="HAMAP-Rule" id="MF_01365"/>
    </source>
</evidence>
<evidence type="ECO:0000305" key="2"/>
<proteinExistence type="inferred from homology"/>